<proteinExistence type="inferred from homology"/>
<dbReference type="EMBL" id="CR382123">
    <property type="protein sequence ID" value="CAH01291.1"/>
    <property type="molecule type" value="Genomic_DNA"/>
</dbReference>
<dbReference type="RefSeq" id="XP_452440.1">
    <property type="nucleotide sequence ID" value="XM_452440.1"/>
</dbReference>
<dbReference type="SMR" id="Q6CUE9"/>
<dbReference type="FunCoup" id="Q6CUE9">
    <property type="interactions" value="34"/>
</dbReference>
<dbReference type="STRING" id="284590.Q6CUE9"/>
<dbReference type="PaxDb" id="284590-Q6CUE9"/>
<dbReference type="KEGG" id="kla:KLLA0_C05390g"/>
<dbReference type="eggNOG" id="ENOG502QTYD">
    <property type="taxonomic scope" value="Eukaryota"/>
</dbReference>
<dbReference type="HOGENOM" id="CLU_097607_0_0_1"/>
<dbReference type="InParanoid" id="Q6CUE9"/>
<dbReference type="OMA" id="GEVNTTW"/>
<dbReference type="Proteomes" id="UP000000598">
    <property type="component" value="Chromosome C"/>
</dbReference>
<dbReference type="GO" id="GO:0005737">
    <property type="term" value="C:cytoplasm"/>
    <property type="evidence" value="ECO:0007669"/>
    <property type="project" value="UniProtKB-SubCell"/>
</dbReference>
<dbReference type="GO" id="GO:0005634">
    <property type="term" value="C:nucleus"/>
    <property type="evidence" value="ECO:0007669"/>
    <property type="project" value="UniProtKB-SubCell"/>
</dbReference>
<dbReference type="CDD" id="cd11693">
    <property type="entry name" value="HRI1_C_like"/>
    <property type="match status" value="1"/>
</dbReference>
<dbReference type="CDD" id="cd11692">
    <property type="entry name" value="HRI1_N_like"/>
    <property type="match status" value="1"/>
</dbReference>
<dbReference type="Gene3D" id="2.40.128.310">
    <property type="entry name" value="Protein HRI1, C-terminal domain"/>
    <property type="match status" value="1"/>
</dbReference>
<dbReference type="Gene3D" id="2.40.128.320">
    <property type="entry name" value="Protein HRI1, N-terminal domain"/>
    <property type="match status" value="1"/>
</dbReference>
<dbReference type="InterPro" id="IPR031818">
    <property type="entry name" value="Hri1"/>
</dbReference>
<dbReference type="InterPro" id="IPR038744">
    <property type="entry name" value="Hri1_N"/>
</dbReference>
<dbReference type="InterPro" id="IPR043047">
    <property type="entry name" value="Hri1_N_sf"/>
</dbReference>
<dbReference type="Pfam" id="PF16815">
    <property type="entry name" value="HRI1"/>
    <property type="match status" value="1"/>
</dbReference>
<protein>
    <recommendedName>
        <fullName>Protein HRI1</fullName>
    </recommendedName>
</protein>
<sequence>MVSLTKRVLFEVIPNPPDETTLTLSSTTNKGHYISVRPFVNAEGKEFPFEWAFGGTSDHIELKKINERANSLNFNFKFDTNVKLNVPETHRGVIKTVFKTWDSGLVEETGSVFPWGTEGTEVKFRELWQPVDPTRLEFVELNNEKDVDQAANSIALSVDNEEYEGLVIVVGRWIQGILFKKGVNTLDGINLFRSQIDEKNSIVSLVKFGADADKFPQEVLLNEGSITTSKGLEWSVIESNL</sequence>
<comment type="subcellular location">
    <subcellularLocation>
        <location evidence="1">Cytoplasm</location>
    </subcellularLocation>
    <subcellularLocation>
        <location evidence="1">Nucleus</location>
    </subcellularLocation>
</comment>
<comment type="similarity">
    <text evidence="2">Belongs to the HRI1 family.</text>
</comment>
<organism>
    <name type="scientific">Kluyveromyces lactis (strain ATCC 8585 / CBS 2359 / DSM 70799 / NBRC 1267 / NRRL Y-1140 / WM37)</name>
    <name type="common">Yeast</name>
    <name type="synonym">Candida sphaerica</name>
    <dbReference type="NCBI Taxonomy" id="284590"/>
    <lineage>
        <taxon>Eukaryota</taxon>
        <taxon>Fungi</taxon>
        <taxon>Dikarya</taxon>
        <taxon>Ascomycota</taxon>
        <taxon>Saccharomycotina</taxon>
        <taxon>Saccharomycetes</taxon>
        <taxon>Saccharomycetales</taxon>
        <taxon>Saccharomycetaceae</taxon>
        <taxon>Kluyveromyces</taxon>
    </lineage>
</organism>
<accession>Q6CUE9</accession>
<gene>
    <name type="primary">HRI1</name>
    <name type="ordered locus">KLLA0C05390g</name>
</gene>
<name>HRI1_KLULA</name>
<feature type="chain" id="PRO_0000410810" description="Protein HRI1">
    <location>
        <begin position="1"/>
        <end position="241"/>
    </location>
</feature>
<evidence type="ECO:0000250" key="1"/>
<evidence type="ECO:0000305" key="2"/>
<reference key="1">
    <citation type="journal article" date="2004" name="Nature">
        <title>Genome evolution in yeasts.</title>
        <authorList>
            <person name="Dujon B."/>
            <person name="Sherman D."/>
            <person name="Fischer G."/>
            <person name="Durrens P."/>
            <person name="Casaregola S."/>
            <person name="Lafontaine I."/>
            <person name="de Montigny J."/>
            <person name="Marck C."/>
            <person name="Neuveglise C."/>
            <person name="Talla E."/>
            <person name="Goffard N."/>
            <person name="Frangeul L."/>
            <person name="Aigle M."/>
            <person name="Anthouard V."/>
            <person name="Babour A."/>
            <person name="Barbe V."/>
            <person name="Barnay S."/>
            <person name="Blanchin S."/>
            <person name="Beckerich J.-M."/>
            <person name="Beyne E."/>
            <person name="Bleykasten C."/>
            <person name="Boisrame A."/>
            <person name="Boyer J."/>
            <person name="Cattolico L."/>
            <person name="Confanioleri F."/>
            <person name="de Daruvar A."/>
            <person name="Despons L."/>
            <person name="Fabre E."/>
            <person name="Fairhead C."/>
            <person name="Ferry-Dumazet H."/>
            <person name="Groppi A."/>
            <person name="Hantraye F."/>
            <person name="Hennequin C."/>
            <person name="Jauniaux N."/>
            <person name="Joyet P."/>
            <person name="Kachouri R."/>
            <person name="Kerrest A."/>
            <person name="Koszul R."/>
            <person name="Lemaire M."/>
            <person name="Lesur I."/>
            <person name="Ma L."/>
            <person name="Muller H."/>
            <person name="Nicaud J.-M."/>
            <person name="Nikolski M."/>
            <person name="Oztas S."/>
            <person name="Ozier-Kalogeropoulos O."/>
            <person name="Pellenz S."/>
            <person name="Potier S."/>
            <person name="Richard G.-F."/>
            <person name="Straub M.-L."/>
            <person name="Suleau A."/>
            <person name="Swennen D."/>
            <person name="Tekaia F."/>
            <person name="Wesolowski-Louvel M."/>
            <person name="Westhof E."/>
            <person name="Wirth B."/>
            <person name="Zeniou-Meyer M."/>
            <person name="Zivanovic Y."/>
            <person name="Bolotin-Fukuhara M."/>
            <person name="Thierry A."/>
            <person name="Bouchier C."/>
            <person name="Caudron B."/>
            <person name="Scarpelli C."/>
            <person name="Gaillardin C."/>
            <person name="Weissenbach J."/>
            <person name="Wincker P."/>
            <person name="Souciet J.-L."/>
        </authorList>
    </citation>
    <scope>NUCLEOTIDE SEQUENCE [LARGE SCALE GENOMIC DNA]</scope>
    <source>
        <strain>ATCC 8585 / CBS 2359 / DSM 70799 / NBRC 1267 / NRRL Y-1140 / WM37</strain>
    </source>
</reference>
<keyword id="KW-0963">Cytoplasm</keyword>
<keyword id="KW-0539">Nucleus</keyword>
<keyword id="KW-1185">Reference proteome</keyword>